<reference key="1">
    <citation type="journal article" date="2008" name="BMC Genomics">
        <title>Genome sequence and rapid evolution of the rice pathogen Xanthomonas oryzae pv. oryzae PXO99A.</title>
        <authorList>
            <person name="Salzberg S.L."/>
            <person name="Sommer D.D."/>
            <person name="Schatz M.C."/>
            <person name="Phillippy A.M."/>
            <person name="Rabinowicz P.D."/>
            <person name="Tsuge S."/>
            <person name="Furutani A."/>
            <person name="Ochiai H."/>
            <person name="Delcher A.L."/>
            <person name="Kelley D."/>
            <person name="Madupu R."/>
            <person name="Puiu D."/>
            <person name="Radune D."/>
            <person name="Shumway M."/>
            <person name="Trapnell C."/>
            <person name="Aparna G."/>
            <person name="Jha G."/>
            <person name="Pandey A."/>
            <person name="Patil P.B."/>
            <person name="Ishihara H."/>
            <person name="Meyer D.F."/>
            <person name="Szurek B."/>
            <person name="Verdier V."/>
            <person name="Koebnik R."/>
            <person name="Dow J.M."/>
            <person name="Ryan R.P."/>
            <person name="Hirata H."/>
            <person name="Tsuyumu S."/>
            <person name="Won Lee S."/>
            <person name="Seo Y.-S."/>
            <person name="Sriariyanum M."/>
            <person name="Ronald P.C."/>
            <person name="Sonti R.V."/>
            <person name="Van Sluys M.-A."/>
            <person name="Leach J.E."/>
            <person name="White F.F."/>
            <person name="Bogdanove A.J."/>
        </authorList>
    </citation>
    <scope>NUCLEOTIDE SEQUENCE [LARGE SCALE GENOMIC DNA]</scope>
    <source>
        <strain>PXO99A</strain>
    </source>
</reference>
<feature type="chain" id="PRO_1000145077" description="Protein translocase subunit SecA">
    <location>
        <begin position="1"/>
        <end position="912"/>
    </location>
</feature>
<feature type="region of interest" description="Disordered" evidence="2">
    <location>
        <begin position="865"/>
        <end position="912"/>
    </location>
</feature>
<feature type="compositionally biased region" description="Basic residues" evidence="2">
    <location>
        <begin position="902"/>
        <end position="912"/>
    </location>
</feature>
<feature type="binding site" evidence="1">
    <location>
        <position position="87"/>
    </location>
    <ligand>
        <name>ATP</name>
        <dbReference type="ChEBI" id="CHEBI:30616"/>
    </ligand>
</feature>
<feature type="binding site" evidence="1">
    <location>
        <begin position="105"/>
        <end position="109"/>
    </location>
    <ligand>
        <name>ATP</name>
        <dbReference type="ChEBI" id="CHEBI:30616"/>
    </ligand>
</feature>
<feature type="binding site" evidence="1">
    <location>
        <position position="508"/>
    </location>
    <ligand>
        <name>ATP</name>
        <dbReference type="ChEBI" id="CHEBI:30616"/>
    </ligand>
</feature>
<feature type="binding site" evidence="1">
    <location>
        <position position="896"/>
    </location>
    <ligand>
        <name>Zn(2+)</name>
        <dbReference type="ChEBI" id="CHEBI:29105"/>
    </ligand>
</feature>
<feature type="binding site" evidence="1">
    <location>
        <position position="898"/>
    </location>
    <ligand>
        <name>Zn(2+)</name>
        <dbReference type="ChEBI" id="CHEBI:29105"/>
    </ligand>
</feature>
<feature type="binding site" evidence="1">
    <location>
        <position position="907"/>
    </location>
    <ligand>
        <name>Zn(2+)</name>
        <dbReference type="ChEBI" id="CHEBI:29105"/>
    </ligand>
</feature>
<feature type="binding site" evidence="1">
    <location>
        <position position="908"/>
    </location>
    <ligand>
        <name>Zn(2+)</name>
        <dbReference type="ChEBI" id="CHEBI:29105"/>
    </ligand>
</feature>
<keyword id="KW-0067">ATP-binding</keyword>
<keyword id="KW-0997">Cell inner membrane</keyword>
<keyword id="KW-1003">Cell membrane</keyword>
<keyword id="KW-0963">Cytoplasm</keyword>
<keyword id="KW-0472">Membrane</keyword>
<keyword id="KW-0479">Metal-binding</keyword>
<keyword id="KW-0547">Nucleotide-binding</keyword>
<keyword id="KW-0653">Protein transport</keyword>
<keyword id="KW-1278">Translocase</keyword>
<keyword id="KW-0811">Translocation</keyword>
<keyword id="KW-0813">Transport</keyword>
<keyword id="KW-0862">Zinc</keyword>
<name>SECA_XANOP</name>
<dbReference type="EC" id="7.4.2.8" evidence="1"/>
<dbReference type="EMBL" id="CP000967">
    <property type="protein sequence ID" value="ACD57703.1"/>
    <property type="molecule type" value="Genomic_DNA"/>
</dbReference>
<dbReference type="RefSeq" id="WP_012444193.1">
    <property type="nucleotide sequence ID" value="NC_010717.2"/>
</dbReference>
<dbReference type="SMR" id="B2SPL6"/>
<dbReference type="KEGG" id="xop:PXO_04358"/>
<dbReference type="eggNOG" id="COG0653">
    <property type="taxonomic scope" value="Bacteria"/>
</dbReference>
<dbReference type="HOGENOM" id="CLU_005314_3_0_6"/>
<dbReference type="Proteomes" id="UP000001740">
    <property type="component" value="Chromosome"/>
</dbReference>
<dbReference type="GO" id="GO:0031522">
    <property type="term" value="C:cell envelope Sec protein transport complex"/>
    <property type="evidence" value="ECO:0007669"/>
    <property type="project" value="TreeGrafter"/>
</dbReference>
<dbReference type="GO" id="GO:0005829">
    <property type="term" value="C:cytosol"/>
    <property type="evidence" value="ECO:0007669"/>
    <property type="project" value="TreeGrafter"/>
</dbReference>
<dbReference type="GO" id="GO:0005886">
    <property type="term" value="C:plasma membrane"/>
    <property type="evidence" value="ECO:0007669"/>
    <property type="project" value="UniProtKB-SubCell"/>
</dbReference>
<dbReference type="GO" id="GO:0005524">
    <property type="term" value="F:ATP binding"/>
    <property type="evidence" value="ECO:0007669"/>
    <property type="project" value="UniProtKB-UniRule"/>
</dbReference>
<dbReference type="GO" id="GO:0046872">
    <property type="term" value="F:metal ion binding"/>
    <property type="evidence" value="ECO:0007669"/>
    <property type="project" value="UniProtKB-KW"/>
</dbReference>
<dbReference type="GO" id="GO:0008564">
    <property type="term" value="F:protein-exporting ATPase activity"/>
    <property type="evidence" value="ECO:0007669"/>
    <property type="project" value="UniProtKB-EC"/>
</dbReference>
<dbReference type="GO" id="GO:0065002">
    <property type="term" value="P:intracellular protein transmembrane transport"/>
    <property type="evidence" value="ECO:0007669"/>
    <property type="project" value="UniProtKB-UniRule"/>
</dbReference>
<dbReference type="GO" id="GO:0017038">
    <property type="term" value="P:protein import"/>
    <property type="evidence" value="ECO:0007669"/>
    <property type="project" value="InterPro"/>
</dbReference>
<dbReference type="GO" id="GO:0006605">
    <property type="term" value="P:protein targeting"/>
    <property type="evidence" value="ECO:0007669"/>
    <property type="project" value="UniProtKB-UniRule"/>
</dbReference>
<dbReference type="GO" id="GO:0043952">
    <property type="term" value="P:protein transport by the Sec complex"/>
    <property type="evidence" value="ECO:0007669"/>
    <property type="project" value="TreeGrafter"/>
</dbReference>
<dbReference type="CDD" id="cd17928">
    <property type="entry name" value="DEXDc_SecA"/>
    <property type="match status" value="1"/>
</dbReference>
<dbReference type="CDD" id="cd18803">
    <property type="entry name" value="SF2_C_secA"/>
    <property type="match status" value="1"/>
</dbReference>
<dbReference type="FunFam" id="3.40.50.300:FF:000113">
    <property type="entry name" value="Preprotein translocase subunit SecA"/>
    <property type="match status" value="1"/>
</dbReference>
<dbReference type="FunFam" id="3.90.1440.10:FF:000001">
    <property type="entry name" value="Preprotein translocase subunit SecA"/>
    <property type="match status" value="1"/>
</dbReference>
<dbReference type="FunFam" id="1.10.3060.10:FF:000003">
    <property type="entry name" value="Protein translocase subunit SecA"/>
    <property type="match status" value="1"/>
</dbReference>
<dbReference type="FunFam" id="3.40.50.300:FF:000334">
    <property type="entry name" value="Protein translocase subunit SecA"/>
    <property type="match status" value="1"/>
</dbReference>
<dbReference type="Gene3D" id="1.10.3060.10">
    <property type="entry name" value="Helical scaffold and wing domains of SecA"/>
    <property type="match status" value="1"/>
</dbReference>
<dbReference type="Gene3D" id="3.40.50.300">
    <property type="entry name" value="P-loop containing nucleotide triphosphate hydrolases"/>
    <property type="match status" value="2"/>
</dbReference>
<dbReference type="Gene3D" id="3.90.1440.10">
    <property type="entry name" value="SecA, preprotein cross-linking domain"/>
    <property type="match status" value="1"/>
</dbReference>
<dbReference type="HAMAP" id="MF_01382">
    <property type="entry name" value="SecA"/>
    <property type="match status" value="1"/>
</dbReference>
<dbReference type="InterPro" id="IPR014001">
    <property type="entry name" value="Helicase_ATP-bd"/>
</dbReference>
<dbReference type="InterPro" id="IPR001650">
    <property type="entry name" value="Helicase_C-like"/>
</dbReference>
<dbReference type="InterPro" id="IPR027417">
    <property type="entry name" value="P-loop_NTPase"/>
</dbReference>
<dbReference type="InterPro" id="IPR004027">
    <property type="entry name" value="SEC_C_motif"/>
</dbReference>
<dbReference type="InterPro" id="IPR000185">
    <property type="entry name" value="SecA"/>
</dbReference>
<dbReference type="InterPro" id="IPR020937">
    <property type="entry name" value="SecA_CS"/>
</dbReference>
<dbReference type="InterPro" id="IPR011115">
    <property type="entry name" value="SecA_DEAD"/>
</dbReference>
<dbReference type="InterPro" id="IPR014018">
    <property type="entry name" value="SecA_motor_DEAD"/>
</dbReference>
<dbReference type="InterPro" id="IPR011130">
    <property type="entry name" value="SecA_preprotein_X-link_dom"/>
</dbReference>
<dbReference type="InterPro" id="IPR044722">
    <property type="entry name" value="SecA_SF2_C"/>
</dbReference>
<dbReference type="InterPro" id="IPR011116">
    <property type="entry name" value="SecA_Wing/Scaffold"/>
</dbReference>
<dbReference type="InterPro" id="IPR036266">
    <property type="entry name" value="SecA_Wing/Scaffold_sf"/>
</dbReference>
<dbReference type="InterPro" id="IPR036670">
    <property type="entry name" value="SecA_X-link_sf"/>
</dbReference>
<dbReference type="NCBIfam" id="NF009538">
    <property type="entry name" value="PRK12904.1"/>
    <property type="match status" value="1"/>
</dbReference>
<dbReference type="NCBIfam" id="TIGR00963">
    <property type="entry name" value="secA"/>
    <property type="match status" value="1"/>
</dbReference>
<dbReference type="PANTHER" id="PTHR30612:SF0">
    <property type="entry name" value="CHLOROPLAST PROTEIN-TRANSPORTING ATPASE"/>
    <property type="match status" value="1"/>
</dbReference>
<dbReference type="PANTHER" id="PTHR30612">
    <property type="entry name" value="SECA INNER MEMBRANE COMPONENT OF SEC PROTEIN SECRETION SYSTEM"/>
    <property type="match status" value="1"/>
</dbReference>
<dbReference type="Pfam" id="PF21090">
    <property type="entry name" value="P-loop_SecA"/>
    <property type="match status" value="1"/>
</dbReference>
<dbReference type="Pfam" id="PF02810">
    <property type="entry name" value="SEC-C"/>
    <property type="match status" value="1"/>
</dbReference>
<dbReference type="Pfam" id="PF07517">
    <property type="entry name" value="SecA_DEAD"/>
    <property type="match status" value="1"/>
</dbReference>
<dbReference type="Pfam" id="PF01043">
    <property type="entry name" value="SecA_PP_bind"/>
    <property type="match status" value="1"/>
</dbReference>
<dbReference type="Pfam" id="PF07516">
    <property type="entry name" value="SecA_SW"/>
    <property type="match status" value="1"/>
</dbReference>
<dbReference type="PRINTS" id="PR00906">
    <property type="entry name" value="SECA"/>
</dbReference>
<dbReference type="SMART" id="SM00957">
    <property type="entry name" value="SecA_DEAD"/>
    <property type="match status" value="1"/>
</dbReference>
<dbReference type="SMART" id="SM00958">
    <property type="entry name" value="SecA_PP_bind"/>
    <property type="match status" value="1"/>
</dbReference>
<dbReference type="SUPFAM" id="SSF81886">
    <property type="entry name" value="Helical scaffold and wing domains of SecA"/>
    <property type="match status" value="1"/>
</dbReference>
<dbReference type="SUPFAM" id="SSF52540">
    <property type="entry name" value="P-loop containing nucleoside triphosphate hydrolases"/>
    <property type="match status" value="2"/>
</dbReference>
<dbReference type="SUPFAM" id="SSF81767">
    <property type="entry name" value="Pre-protein crosslinking domain of SecA"/>
    <property type="match status" value="1"/>
</dbReference>
<dbReference type="PROSITE" id="PS01312">
    <property type="entry name" value="SECA"/>
    <property type="match status" value="1"/>
</dbReference>
<dbReference type="PROSITE" id="PS51196">
    <property type="entry name" value="SECA_MOTOR_DEAD"/>
    <property type="match status" value="1"/>
</dbReference>
<organism>
    <name type="scientific">Xanthomonas oryzae pv. oryzae (strain PXO99A)</name>
    <dbReference type="NCBI Taxonomy" id="360094"/>
    <lineage>
        <taxon>Bacteria</taxon>
        <taxon>Pseudomonadati</taxon>
        <taxon>Pseudomonadota</taxon>
        <taxon>Gammaproteobacteria</taxon>
        <taxon>Lysobacterales</taxon>
        <taxon>Lysobacteraceae</taxon>
        <taxon>Xanthomonas</taxon>
    </lineage>
</organism>
<evidence type="ECO:0000255" key="1">
    <source>
        <dbReference type="HAMAP-Rule" id="MF_01382"/>
    </source>
</evidence>
<evidence type="ECO:0000256" key="2">
    <source>
        <dbReference type="SAM" id="MobiDB-lite"/>
    </source>
</evidence>
<sequence length="912" mass="102395">MINSLLTRVFGSRNERQLRQLTRLVTQINALEPTIEKLSDAELQAKTPEFKQRLAAGESLDKILPEAFAVCREASRRVLGMRHYDVQLIGGMVLHLGKIAEMRTGEGKTLVATLPVYLNALQGEGVHVVTVNDYLARRDAAQMGKLYNWLGLSVGVVYPGMPHSDKREAYGSDITYGTNNEFGFDYLRDNMALSRADRYQRTLHYAIVDEVDSILIDEARTPLIISGPADESPELYIRVNRIVPQLTKQESEEGEGDFWVDEKGKQVHLSEAGMGHAEELLLQAGILENAEDGLYAAQNLSVVHHLNAALRAHAIYQRDVDYIVRDGEVVIVDEFTGRTLSGRRWSDGLHQAVEAKEGVPVQRENQTLASITFQNLFRMYKKLSGMTGTADTEAYEFQSIYGLEVVVIPTNRPTVRKDHPDQVFLNRKGKFNAVLADIEDCAKRGQPVLVGTTSIETSEMLSEHLRKAGVKHEVLNAKQHEREATIVANAGQPGAVTIATNMAGRGTDIVLGGSLESEYHALGEDATEDARFKIKTDWQRRHDAVKAAGGLHIIGTERHESRRIDNQLRGRAGRQGDPGSSRFYLSLEDNLMRIFASDWVQKAMRMMGMKEDDVIEDRLVSRQIEKAQRKVEAHNFDIRKNLLDFDDVNNDQRKVIYAQRDELLDAESVKDNVDGIRGDVIYDLVARFVPPNSVDEQWDVKGLEATLESELGVTLSLTDMVRTQEEIDAEQIAAKVQAAVDAHFAEKEAAVGNDTMRALEKHVMLTVLDQGWKEHLAKMDYLRQGIYLRGYAQKQPKQEYKKEAFELFSEMLENVKREVIHLLARVRIRSEEEVAELEEQERLHAQARLMASQFQHQDVGGYGTDEEAAQVQSGNAPLPVSQVTRDEPKVGRNDPCPCGSGKKYKHCHGQLS</sequence>
<gene>
    <name evidence="1" type="primary">secA</name>
    <name type="ordered locus">PXO_04358</name>
</gene>
<comment type="function">
    <text evidence="1">Part of the Sec protein translocase complex. Interacts with the SecYEG preprotein conducting channel. Has a central role in coupling the hydrolysis of ATP to the transfer of proteins into and across the cell membrane, serving both as a receptor for the preprotein-SecB complex and as an ATP-driven molecular motor driving the stepwise translocation of polypeptide chains across the membrane.</text>
</comment>
<comment type="catalytic activity">
    <reaction evidence="1">
        <text>ATP + H2O + cellular proteinSide 1 = ADP + phosphate + cellular proteinSide 2.</text>
        <dbReference type="EC" id="7.4.2.8"/>
    </reaction>
</comment>
<comment type="cofactor">
    <cofactor evidence="1">
        <name>Zn(2+)</name>
        <dbReference type="ChEBI" id="CHEBI:29105"/>
    </cofactor>
    <text evidence="1">May bind 1 zinc ion per subunit.</text>
</comment>
<comment type="subunit">
    <text evidence="1">Monomer and homodimer. Part of the essential Sec protein translocation apparatus which comprises SecA, SecYEG and auxiliary proteins SecDF-YajC and YidC.</text>
</comment>
<comment type="subcellular location">
    <subcellularLocation>
        <location evidence="1">Cell inner membrane</location>
        <topology evidence="1">Peripheral membrane protein</topology>
        <orientation evidence="1">Cytoplasmic side</orientation>
    </subcellularLocation>
    <subcellularLocation>
        <location evidence="1">Cytoplasm</location>
    </subcellularLocation>
    <text evidence="1">Distribution is 50-50.</text>
</comment>
<comment type="similarity">
    <text evidence="1">Belongs to the SecA family.</text>
</comment>
<protein>
    <recommendedName>
        <fullName evidence="1">Protein translocase subunit SecA</fullName>
        <ecNumber evidence="1">7.4.2.8</ecNumber>
    </recommendedName>
</protein>
<proteinExistence type="inferred from homology"/>
<accession>B2SPL6</accession>